<keyword id="KW-0002">3D-structure</keyword>
<keyword id="KW-1185">Reference proteome</keyword>
<accession>P0C0L9</accession>
<accession>P37096</accession>
<comment type="function">
    <text>May function as iron donor in the assembly of iron-sulfur clusters.</text>
</comment>
<comment type="subunit">
    <text evidence="1">Monomer.</text>
</comment>
<comment type="similarity">
    <text evidence="2">Belongs to the IscX family.</text>
</comment>
<sequence length="66" mass="7732">MGLKWTDSREIGEALYDAYPDLDPKTVRFTDMHQWICDLEDFDDDPQASNEKILEAILLVWLDEAE</sequence>
<proteinExistence type="evidence at protein level"/>
<dbReference type="EMBL" id="M88654">
    <property type="status" value="NOT_ANNOTATED_CDS"/>
    <property type="molecule type" value="Genomic_DNA"/>
</dbReference>
<dbReference type="EMBL" id="U01827">
    <property type="status" value="NOT_ANNOTATED_CDS"/>
    <property type="molecule type" value="Unassigned_DNA"/>
</dbReference>
<dbReference type="EMBL" id="U00096">
    <property type="protein sequence ID" value="AAC75577.1"/>
    <property type="molecule type" value="Genomic_DNA"/>
</dbReference>
<dbReference type="EMBL" id="AP009048">
    <property type="protein sequence ID" value="BAA16414.1"/>
    <property type="molecule type" value="Genomic_DNA"/>
</dbReference>
<dbReference type="PIR" id="C65029">
    <property type="entry name" value="C65029"/>
</dbReference>
<dbReference type="RefSeq" id="NP_417019.1">
    <property type="nucleotide sequence ID" value="NC_000913.3"/>
</dbReference>
<dbReference type="RefSeq" id="WP_000523616.1">
    <property type="nucleotide sequence ID" value="NZ_STEB01000011.1"/>
</dbReference>
<dbReference type="PDB" id="1UJ8">
    <property type="method" value="X-ray"/>
    <property type="resolution" value="1.75 A"/>
    <property type="chains" value="A=2-66"/>
</dbReference>
<dbReference type="PDB" id="2BZT">
    <property type="method" value="NMR"/>
    <property type="chains" value="A=1-66"/>
</dbReference>
<dbReference type="PDBsum" id="1UJ8"/>
<dbReference type="PDBsum" id="2BZT"/>
<dbReference type="BMRB" id="P0C0L9"/>
<dbReference type="SMR" id="P0C0L9"/>
<dbReference type="BioGRID" id="4260583">
    <property type="interactions" value="15"/>
</dbReference>
<dbReference type="DIP" id="DIP-48188N"/>
<dbReference type="FunCoup" id="P0C0L9">
    <property type="interactions" value="22"/>
</dbReference>
<dbReference type="IntAct" id="P0C0L9">
    <property type="interactions" value="5"/>
</dbReference>
<dbReference type="STRING" id="511145.b2524"/>
<dbReference type="jPOST" id="P0C0L9"/>
<dbReference type="PaxDb" id="511145-b2524"/>
<dbReference type="EnsemblBacteria" id="AAC75577">
    <property type="protein sequence ID" value="AAC75577"/>
    <property type="gene ID" value="b2524"/>
</dbReference>
<dbReference type="GeneID" id="93774612"/>
<dbReference type="GeneID" id="945196"/>
<dbReference type="KEGG" id="ecj:JW2508"/>
<dbReference type="KEGG" id="eco:b2524"/>
<dbReference type="KEGG" id="ecoc:C3026_13990"/>
<dbReference type="PATRIC" id="fig|1411691.4.peg.4210"/>
<dbReference type="EchoBASE" id="EB2217"/>
<dbReference type="eggNOG" id="COG2975">
    <property type="taxonomic scope" value="Bacteria"/>
</dbReference>
<dbReference type="HOGENOM" id="CLU_168040_1_0_6"/>
<dbReference type="InParanoid" id="P0C0L9"/>
<dbReference type="OMA" id="AIQQAWI"/>
<dbReference type="OrthoDB" id="9800346at2"/>
<dbReference type="PhylomeDB" id="P0C0L9"/>
<dbReference type="BioCyc" id="EcoCyc:EG12311-MONOMER"/>
<dbReference type="EvolutionaryTrace" id="P0C0L9"/>
<dbReference type="PRO" id="PR:P0C0L9"/>
<dbReference type="Proteomes" id="UP000000625">
    <property type="component" value="Chromosome"/>
</dbReference>
<dbReference type="GO" id="GO:0005829">
    <property type="term" value="C:cytosol"/>
    <property type="evidence" value="ECO:0000314"/>
    <property type="project" value="EcoCyc"/>
</dbReference>
<dbReference type="GO" id="GO:0004857">
    <property type="term" value="F:enzyme inhibitor activity"/>
    <property type="evidence" value="ECO:0000314"/>
    <property type="project" value="EcoCyc"/>
</dbReference>
<dbReference type="GO" id="GO:0008198">
    <property type="term" value="F:ferrous iron binding"/>
    <property type="evidence" value="ECO:0000314"/>
    <property type="project" value="EcoCyc"/>
</dbReference>
<dbReference type="GO" id="GO:0005506">
    <property type="term" value="F:iron ion binding"/>
    <property type="evidence" value="ECO:0000314"/>
    <property type="project" value="EcoCyc"/>
</dbReference>
<dbReference type="GO" id="GO:0016226">
    <property type="term" value="P:iron-sulfur cluster assembly"/>
    <property type="evidence" value="ECO:0000316"/>
    <property type="project" value="EcoCyc"/>
</dbReference>
<dbReference type="FunFam" id="1.10.10.600:FF:000001">
    <property type="entry name" value="Fe-S assembly protein IscX"/>
    <property type="match status" value="1"/>
</dbReference>
<dbReference type="Gene3D" id="1.10.10.600">
    <property type="entry name" value="IscX-like"/>
    <property type="match status" value="1"/>
</dbReference>
<dbReference type="InterPro" id="IPR007479">
    <property type="entry name" value="ISC_FeS_clus_asmbl_IscsX"/>
</dbReference>
<dbReference type="InterPro" id="IPR036762">
    <property type="entry name" value="IscX-like_sf"/>
</dbReference>
<dbReference type="NCBIfam" id="TIGR03412">
    <property type="entry name" value="iscX_yfhJ"/>
    <property type="match status" value="1"/>
</dbReference>
<dbReference type="PANTHER" id="PTHR37532">
    <property type="entry name" value="PROTEIN ISCX"/>
    <property type="match status" value="1"/>
</dbReference>
<dbReference type="PANTHER" id="PTHR37532:SF1">
    <property type="entry name" value="PROTEIN ISCX"/>
    <property type="match status" value="1"/>
</dbReference>
<dbReference type="Pfam" id="PF04384">
    <property type="entry name" value="Fe-S_assembly"/>
    <property type="match status" value="1"/>
</dbReference>
<dbReference type="PIRSF" id="PIRSF039003">
    <property type="entry name" value="IscX"/>
    <property type="match status" value="1"/>
</dbReference>
<dbReference type="SUPFAM" id="SSF140319">
    <property type="entry name" value="IscX-like"/>
    <property type="match status" value="1"/>
</dbReference>
<protein>
    <recommendedName>
        <fullName>Protein IscX</fullName>
    </recommendedName>
</protein>
<name>ISCX_ECOLI</name>
<reference key="1">
    <citation type="journal article" date="1992" name="J. Biol. Chem.">
        <title>Cloning, sequencing, and overexpression of a [2Fe-2S] ferredoxin gene from Escherichia coli.</title>
        <authorList>
            <person name="Ta D.T."/>
            <person name="Vickery L.E."/>
        </authorList>
    </citation>
    <scope>NUCLEOTIDE SEQUENCE [GENOMIC DNA]</scope>
    <source>
        <strain>K12</strain>
    </source>
</reference>
<reference key="2">
    <citation type="journal article" date="1994" name="J. Bacteriol.">
        <title>Mutations in a gene encoding a new Hsp70 suppress rapid DNA inversion and bgl activation, but not proU derepression, in hns-1 mutant Escherichia coli.</title>
        <authorList>
            <person name="Kawula T.H."/>
            <person name="Lelivelt M.J."/>
        </authorList>
    </citation>
    <scope>NUCLEOTIDE SEQUENCE [GENOMIC DNA]</scope>
    <source>
        <strain>K12</strain>
    </source>
</reference>
<reference key="3">
    <citation type="journal article" date="1997" name="DNA Res.">
        <title>Construction of a contiguous 874-kb sequence of the Escherichia coli-K12 genome corresponding to 50.0-68.8 min on the linkage map and analysis of its sequence features.</title>
        <authorList>
            <person name="Yamamoto Y."/>
            <person name="Aiba H."/>
            <person name="Baba T."/>
            <person name="Hayashi K."/>
            <person name="Inada T."/>
            <person name="Isono K."/>
            <person name="Itoh T."/>
            <person name="Kimura S."/>
            <person name="Kitagawa M."/>
            <person name="Makino K."/>
            <person name="Miki T."/>
            <person name="Mitsuhashi N."/>
            <person name="Mizobuchi K."/>
            <person name="Mori H."/>
            <person name="Nakade S."/>
            <person name="Nakamura Y."/>
            <person name="Nashimoto H."/>
            <person name="Oshima T."/>
            <person name="Oyama S."/>
            <person name="Saito N."/>
            <person name="Sampei G."/>
            <person name="Satoh Y."/>
            <person name="Sivasundaram S."/>
            <person name="Tagami H."/>
            <person name="Takahashi H."/>
            <person name="Takeda J."/>
            <person name="Takemoto K."/>
            <person name="Uehara K."/>
            <person name="Wada C."/>
            <person name="Yamagata S."/>
            <person name="Horiuchi T."/>
        </authorList>
    </citation>
    <scope>NUCLEOTIDE SEQUENCE [LARGE SCALE GENOMIC DNA]</scope>
    <source>
        <strain>K12 / W3110 / ATCC 27325 / DSM 5911</strain>
    </source>
</reference>
<reference key="4">
    <citation type="journal article" date="1997" name="Science">
        <title>The complete genome sequence of Escherichia coli K-12.</title>
        <authorList>
            <person name="Blattner F.R."/>
            <person name="Plunkett G. III"/>
            <person name="Bloch C.A."/>
            <person name="Perna N.T."/>
            <person name="Burland V."/>
            <person name="Riley M."/>
            <person name="Collado-Vides J."/>
            <person name="Glasner J.D."/>
            <person name="Rode C.K."/>
            <person name="Mayhew G.F."/>
            <person name="Gregor J."/>
            <person name="Davis N.W."/>
            <person name="Kirkpatrick H.A."/>
            <person name="Goeden M.A."/>
            <person name="Rose D.J."/>
            <person name="Mau B."/>
            <person name="Shao Y."/>
        </authorList>
    </citation>
    <scope>NUCLEOTIDE SEQUENCE [LARGE SCALE GENOMIC DNA]</scope>
    <source>
        <strain>K12 / MG1655 / ATCC 47076</strain>
    </source>
</reference>
<reference key="5">
    <citation type="journal article" date="2006" name="Mol. Syst. Biol.">
        <title>Highly accurate genome sequences of Escherichia coli K-12 strains MG1655 and W3110.</title>
        <authorList>
            <person name="Hayashi K."/>
            <person name="Morooka N."/>
            <person name="Yamamoto Y."/>
            <person name="Fujita K."/>
            <person name="Isono K."/>
            <person name="Choi S."/>
            <person name="Ohtsubo E."/>
            <person name="Baba T."/>
            <person name="Wanner B.L."/>
            <person name="Mori H."/>
            <person name="Horiuchi T."/>
        </authorList>
    </citation>
    <scope>NUCLEOTIDE SEQUENCE [LARGE SCALE GENOMIC DNA]</scope>
    <source>
        <strain>K12 / W3110 / ATCC 27325 / DSM 5911</strain>
    </source>
</reference>
<reference key="6">
    <citation type="journal article" date="2005" name="Proteins">
        <title>Crystal structure of Escherichia coli YfhJ protein, a member of the ISC machinery involved in assembly of iron-sulfur clusters.</title>
        <authorList>
            <person name="Shimomura Y."/>
            <person name="Takahashi Y."/>
            <person name="Kakuta Y."/>
            <person name="Fukuyama K."/>
        </authorList>
    </citation>
    <scope>X-RAY CRYSTALLOGRAPHY (1.75 ANGSTROMS) OF 2-66</scope>
    <scope>SUBUNIT</scope>
</reference>
<organism>
    <name type="scientific">Escherichia coli (strain K12)</name>
    <dbReference type="NCBI Taxonomy" id="83333"/>
    <lineage>
        <taxon>Bacteria</taxon>
        <taxon>Pseudomonadati</taxon>
        <taxon>Pseudomonadota</taxon>
        <taxon>Gammaproteobacteria</taxon>
        <taxon>Enterobacterales</taxon>
        <taxon>Enterobacteriaceae</taxon>
        <taxon>Escherichia</taxon>
    </lineage>
</organism>
<gene>
    <name type="primary">iscX</name>
    <name type="synonym">yfhJ</name>
    <name type="ordered locus">b2524</name>
    <name type="ordered locus">JW2508</name>
</gene>
<evidence type="ECO:0000269" key="1">
    <source>
    </source>
</evidence>
<evidence type="ECO:0000305" key="2"/>
<evidence type="ECO:0007829" key="3">
    <source>
        <dbReference type="PDB" id="1UJ8"/>
    </source>
</evidence>
<evidence type="ECO:0007829" key="4">
    <source>
        <dbReference type="PDB" id="2BZT"/>
    </source>
</evidence>
<feature type="chain" id="PRO_0000211853" description="Protein IscX">
    <location>
        <begin position="1"/>
        <end position="66"/>
    </location>
</feature>
<feature type="sequence conflict" description="In Ref. 2." evidence="2" ref="2">
    <original>DDDPQASNE</original>
    <variation>RTDPGIPTK</variation>
    <location>
        <begin position="43"/>
        <end position="51"/>
    </location>
</feature>
<feature type="sequence conflict" description="In Ref. 2." evidence="2" ref="2">
    <original>E</original>
    <variation>R</variation>
    <location>
        <position position="55"/>
    </location>
</feature>
<feature type="sequence conflict" description="In Ref. 2." evidence="2" ref="2">
    <original>LLVWLDEAE</original>
    <variation>C</variation>
    <location>
        <begin position="58"/>
        <end position="66"/>
    </location>
</feature>
<feature type="helix" evidence="3">
    <location>
        <begin position="8"/>
        <end position="18"/>
    </location>
</feature>
<feature type="helix" evidence="3">
    <location>
        <begin position="24"/>
        <end position="26"/>
    </location>
</feature>
<feature type="helix" evidence="3">
    <location>
        <begin position="29"/>
        <end position="37"/>
    </location>
</feature>
<feature type="strand" evidence="4">
    <location>
        <begin position="40"/>
        <end position="42"/>
    </location>
</feature>
<feature type="helix" evidence="3">
    <location>
        <begin position="46"/>
        <end position="48"/>
    </location>
</feature>
<feature type="helix" evidence="3">
    <location>
        <begin position="51"/>
        <end position="64"/>
    </location>
</feature>